<reference key="1">
    <citation type="submission" date="2008-03" db="EMBL/GenBank/DDBJ databases">
        <title>Annotation of Ixodes scapularis.</title>
        <authorList>
            <consortium name="Ixodes scapularis Genome Project Consortium"/>
            <person name="Caler E."/>
            <person name="Hannick L.I."/>
            <person name="Bidwell S."/>
            <person name="Joardar V."/>
            <person name="Thiagarajan M."/>
            <person name="Amedeo P."/>
            <person name="Galinsky K.J."/>
            <person name="Schobel S."/>
            <person name="Inman J."/>
            <person name="Hostetler J."/>
            <person name="Miller J."/>
            <person name="Hammond M."/>
            <person name="Megy K."/>
            <person name="Lawson D."/>
            <person name="Kodira C."/>
            <person name="Sutton G."/>
            <person name="Meyer J."/>
            <person name="Hill C.A."/>
            <person name="Birren B."/>
            <person name="Nene V."/>
            <person name="Collins F."/>
            <person name="Alarcon-Chaidez F."/>
            <person name="Wikel S."/>
            <person name="Strausberg R."/>
        </authorList>
    </citation>
    <scope>NUCLEOTIDE SEQUENCE [LARGE SCALE GENOMIC DNA]</scope>
    <source>
        <strain>Wikel</strain>
    </source>
</reference>
<gene>
    <name evidence="1" type="primary">gatA</name>
    <name type="ORF">ISCW003184</name>
</gene>
<keyword id="KW-0067">ATP-binding</keyword>
<keyword id="KW-0436">Ligase</keyword>
<keyword id="KW-0496">Mitochondrion</keyword>
<keyword id="KW-0547">Nucleotide-binding</keyword>
<keyword id="KW-0648">Protein biosynthesis</keyword>
<keyword id="KW-1185">Reference proteome</keyword>
<dbReference type="EC" id="6.3.5.7" evidence="1"/>
<dbReference type="EMBL" id="DS689337">
    <property type="protein sequence ID" value="EEC04597.1"/>
    <property type="molecule type" value="Genomic_DNA"/>
</dbReference>
<dbReference type="RefSeq" id="XP_002410727.1">
    <property type="nucleotide sequence ID" value="XM_002410682.1"/>
</dbReference>
<dbReference type="SMR" id="B7PDC5"/>
<dbReference type="FunCoup" id="B7PDC5">
    <property type="interactions" value="619"/>
</dbReference>
<dbReference type="STRING" id="6945.B7PDC5"/>
<dbReference type="PaxDb" id="6945-B7PDC5"/>
<dbReference type="EnsemblMetazoa" id="ISCW003184-RA">
    <property type="protein sequence ID" value="ISCW003184-PA"/>
    <property type="gene ID" value="ISCW003184"/>
</dbReference>
<dbReference type="GeneID" id="8028239"/>
<dbReference type="KEGG" id="isc:8028239"/>
<dbReference type="CTD" id="42283"/>
<dbReference type="VEuPathDB" id="VectorBase:ISCI003184"/>
<dbReference type="VEuPathDB" id="VectorBase:ISCP_016553"/>
<dbReference type="VEuPathDB" id="VectorBase:ISCW003184"/>
<dbReference type="HOGENOM" id="CLU_009600_7_6_1"/>
<dbReference type="InParanoid" id="B7PDC5"/>
<dbReference type="OrthoDB" id="421993at2759"/>
<dbReference type="PhylomeDB" id="B7PDC5"/>
<dbReference type="Proteomes" id="UP000001555">
    <property type="component" value="Unassembled WGS sequence"/>
</dbReference>
<dbReference type="GO" id="GO:0030956">
    <property type="term" value="C:glutamyl-tRNA(Gln) amidotransferase complex"/>
    <property type="evidence" value="ECO:0000318"/>
    <property type="project" value="GO_Central"/>
</dbReference>
<dbReference type="GO" id="GO:0005739">
    <property type="term" value="C:mitochondrion"/>
    <property type="evidence" value="ECO:0000318"/>
    <property type="project" value="GO_Central"/>
</dbReference>
<dbReference type="GO" id="GO:0005524">
    <property type="term" value="F:ATP binding"/>
    <property type="evidence" value="ECO:0007669"/>
    <property type="project" value="UniProtKB-KW"/>
</dbReference>
<dbReference type="GO" id="GO:0050567">
    <property type="term" value="F:glutaminyl-tRNA synthase (glutamine-hydrolyzing) activity"/>
    <property type="evidence" value="ECO:0000318"/>
    <property type="project" value="GO_Central"/>
</dbReference>
<dbReference type="GO" id="GO:0070681">
    <property type="term" value="P:glutaminyl-tRNAGln biosynthesis via transamidation"/>
    <property type="evidence" value="ECO:0000318"/>
    <property type="project" value="GO_Central"/>
</dbReference>
<dbReference type="GO" id="GO:0032543">
    <property type="term" value="P:mitochondrial translation"/>
    <property type="evidence" value="ECO:0000318"/>
    <property type="project" value="GO_Central"/>
</dbReference>
<dbReference type="Gene3D" id="3.90.1300.10">
    <property type="entry name" value="Amidase signature (AS) domain"/>
    <property type="match status" value="1"/>
</dbReference>
<dbReference type="HAMAP" id="MF_00120">
    <property type="entry name" value="GatA"/>
    <property type="match status" value="1"/>
</dbReference>
<dbReference type="InterPro" id="IPR000120">
    <property type="entry name" value="Amidase"/>
</dbReference>
<dbReference type="InterPro" id="IPR023631">
    <property type="entry name" value="Amidase_dom"/>
</dbReference>
<dbReference type="InterPro" id="IPR036928">
    <property type="entry name" value="AS_sf"/>
</dbReference>
<dbReference type="InterPro" id="IPR004412">
    <property type="entry name" value="GatA"/>
</dbReference>
<dbReference type="PANTHER" id="PTHR11895:SF7">
    <property type="entry name" value="GLUTAMYL-TRNA(GLN) AMIDOTRANSFERASE SUBUNIT A, MITOCHONDRIAL"/>
    <property type="match status" value="1"/>
</dbReference>
<dbReference type="PANTHER" id="PTHR11895">
    <property type="entry name" value="TRANSAMIDASE"/>
    <property type="match status" value="1"/>
</dbReference>
<dbReference type="Pfam" id="PF01425">
    <property type="entry name" value="Amidase"/>
    <property type="match status" value="1"/>
</dbReference>
<dbReference type="SUPFAM" id="SSF75304">
    <property type="entry name" value="Amidase signature (AS) enzymes"/>
    <property type="match status" value="1"/>
</dbReference>
<proteinExistence type="inferred from homology"/>
<protein>
    <recommendedName>
        <fullName evidence="1">Glutamyl-tRNA(Gln) amidotransferase subunit A, mitochondrial</fullName>
        <shortName evidence="1">Glu-AdT subunit A</shortName>
        <ecNumber evidence="1">6.3.5.7</ecNumber>
    </recommendedName>
</protein>
<sequence length="505" mass="54007">MLSLTIKELVSHFKAKKCSPVDICATCIKEINDSSFLNAFVTVLPEAAEKQARESHARWKSGKPRGPLDGVPIAVKDNFCMTGVRTTCGSRMLANFYPPYTATVVERLQGEGAVVLGKTNMDEFGMGSGATDSAFGPTKNPWKNAGEAADDWYITGGSSGGSAVAVATGCSFGALGSDTGGSTRNPASRCGVVGLKPTYGALSRHGLIPLTNSMDVPGILAKCVDDAAVLLSATACADPNDSTSVSAPDSVRHLKLAGEPSLKGVKIGVPKEYHCPGMCPEVLDLWRDVADRLAALGAVVSSVSLPHSRYSTECYSVLNCCEVASNFARYDGLEYGHRASDDSSTDALYAASRHEGLNEVVRGRILAGNYFLLRANYEKYFTKALQVRRLISDDFTKVFASGVELLLTPVTLTAALRHSEWTLKDNRERASVEDFCTQPVNMAGLPAVSVPCRLSREGLPLSLQLVGPKFSEAAMLAAAKRLELELSFPRLDLQLHAHQESYATL</sequence>
<evidence type="ECO:0000255" key="1">
    <source>
        <dbReference type="HAMAP-Rule" id="MF_03150"/>
    </source>
</evidence>
<organism>
    <name type="scientific">Ixodes scapularis</name>
    <name type="common">Black-legged tick</name>
    <name type="synonym">Deer tick</name>
    <dbReference type="NCBI Taxonomy" id="6945"/>
    <lineage>
        <taxon>Eukaryota</taxon>
        <taxon>Metazoa</taxon>
        <taxon>Ecdysozoa</taxon>
        <taxon>Arthropoda</taxon>
        <taxon>Chelicerata</taxon>
        <taxon>Arachnida</taxon>
        <taxon>Acari</taxon>
        <taxon>Parasitiformes</taxon>
        <taxon>Ixodida</taxon>
        <taxon>Ixodoidea</taxon>
        <taxon>Ixodidae</taxon>
        <taxon>Ixodinae</taxon>
        <taxon>Ixodes</taxon>
    </lineage>
</organism>
<accession>B7PDC5</accession>
<feature type="chain" id="PRO_0000413338" description="Glutamyl-tRNA(Gln) amidotransferase subunit A, mitochondrial">
    <location>
        <begin position="1"/>
        <end position="505"/>
    </location>
</feature>
<feature type="active site" description="Charge relay system" evidence="1">
    <location>
        <position position="76"/>
    </location>
</feature>
<feature type="active site" description="Charge relay system" evidence="1">
    <location>
        <position position="158"/>
    </location>
</feature>
<feature type="active site" description="Acyl-ester intermediate" evidence="1">
    <location>
        <position position="182"/>
    </location>
</feature>
<comment type="function">
    <text evidence="1">Allows the formation of correctly charged Gln-tRNA(Gln) through the transamidation of misacylated Glu-tRNA(Gln) in the mitochondria. The reaction takes place in the presence of glutamine and ATP through an activated gamma-phospho-Glu-tRNA(Gln).</text>
</comment>
<comment type="catalytic activity">
    <reaction evidence="1">
        <text>L-glutamyl-tRNA(Gln) + L-glutamine + ATP + H2O = L-glutaminyl-tRNA(Gln) + L-glutamate + ADP + phosphate + H(+)</text>
        <dbReference type="Rhea" id="RHEA:17521"/>
        <dbReference type="Rhea" id="RHEA-COMP:9681"/>
        <dbReference type="Rhea" id="RHEA-COMP:9684"/>
        <dbReference type="ChEBI" id="CHEBI:15377"/>
        <dbReference type="ChEBI" id="CHEBI:15378"/>
        <dbReference type="ChEBI" id="CHEBI:29985"/>
        <dbReference type="ChEBI" id="CHEBI:30616"/>
        <dbReference type="ChEBI" id="CHEBI:43474"/>
        <dbReference type="ChEBI" id="CHEBI:58359"/>
        <dbReference type="ChEBI" id="CHEBI:78520"/>
        <dbReference type="ChEBI" id="CHEBI:78521"/>
        <dbReference type="ChEBI" id="CHEBI:456216"/>
        <dbReference type="EC" id="6.3.5.7"/>
    </reaction>
</comment>
<comment type="subunit">
    <text evidence="1">Subunit of the heterotrimeric GatCAB amidotransferase (AdT) complex, composed of A, B and C subunits.</text>
</comment>
<comment type="subcellular location">
    <subcellularLocation>
        <location evidence="1">Mitochondrion</location>
    </subcellularLocation>
</comment>
<comment type="similarity">
    <text evidence="1">Belongs to the amidase family. GatA subfamily.</text>
</comment>
<name>GATA_IXOSC</name>